<feature type="chain" id="PRO_0000362585" description="ATP synthase subunit a, chloroplastic">
    <location>
        <begin position="1"/>
        <end position="246"/>
    </location>
</feature>
<feature type="transmembrane region" description="Helical" evidence="1">
    <location>
        <begin position="33"/>
        <end position="53"/>
    </location>
</feature>
<feature type="transmembrane region" description="Helical" evidence="1">
    <location>
        <begin position="99"/>
        <end position="119"/>
    </location>
</feature>
<feature type="transmembrane region" description="Helical" evidence="1">
    <location>
        <begin position="133"/>
        <end position="153"/>
    </location>
</feature>
<feature type="transmembrane region" description="Helical" evidence="1">
    <location>
        <begin position="201"/>
        <end position="221"/>
    </location>
</feature>
<feature type="transmembrane region" description="Helical" evidence="1">
    <location>
        <begin position="222"/>
        <end position="242"/>
    </location>
</feature>
<gene>
    <name evidence="1" type="primary">atpI</name>
</gene>
<protein>
    <recommendedName>
        <fullName evidence="1">ATP synthase subunit a, chloroplastic</fullName>
    </recommendedName>
    <alternativeName>
        <fullName evidence="1">ATP synthase F0 sector subunit a</fullName>
    </alternativeName>
    <alternativeName>
        <fullName evidence="1">F-ATPase subunit IV</fullName>
    </alternativeName>
</protein>
<sequence>MLTMSTLVSNPLFELSEVSVGQHFYWNLGGNEVHGQVLLVSWFVLAVIIGFGLTANSNLKPTPDGLQNLSEYVTEFIRDLAKTQIGEEDYLSWVPFLGTIFLFVFVSNWSGALVPWALIELPSGELAAPTNDINTTVALALLTSIAYFYAGINKKGLGYFKRYVEPAAFLLPINVLEDFTKPLSLSFRLFGNILADELVTGVLVALVPLVIPIPLMLLGLFTSAIQALVFSTLAGAYIGESLEDHH</sequence>
<geneLocation type="chloroplast"/>
<reference key="1">
    <citation type="journal article" date="2006" name="BMC Biol.">
        <title>The complete chloroplast DNA sequence of the green alga Oltmannsiellopsis viridis reveals a distinctive quadripartite architecture in the chloroplast genome of early diverging ulvophytes.</title>
        <authorList>
            <person name="Pombert J.-F."/>
            <person name="Lemieux C."/>
            <person name="Turmel M."/>
        </authorList>
    </citation>
    <scope>NUCLEOTIDE SEQUENCE [LARGE SCALE GENOMIC DNA]</scope>
</reference>
<dbReference type="EMBL" id="DQ291132">
    <property type="protein sequence ID" value="ABB81957.1"/>
    <property type="molecule type" value="Genomic_DNA"/>
</dbReference>
<dbReference type="RefSeq" id="YP_635889.1">
    <property type="nucleotide sequence ID" value="NC_008099.1"/>
</dbReference>
<dbReference type="SMR" id="Q20EV6"/>
<dbReference type="GeneID" id="4100083"/>
<dbReference type="GO" id="GO:0009535">
    <property type="term" value="C:chloroplast thylakoid membrane"/>
    <property type="evidence" value="ECO:0007669"/>
    <property type="project" value="UniProtKB-SubCell"/>
</dbReference>
<dbReference type="GO" id="GO:0005886">
    <property type="term" value="C:plasma membrane"/>
    <property type="evidence" value="ECO:0007669"/>
    <property type="project" value="UniProtKB-UniRule"/>
</dbReference>
<dbReference type="GO" id="GO:0045259">
    <property type="term" value="C:proton-transporting ATP synthase complex"/>
    <property type="evidence" value="ECO:0007669"/>
    <property type="project" value="UniProtKB-KW"/>
</dbReference>
<dbReference type="GO" id="GO:0046933">
    <property type="term" value="F:proton-transporting ATP synthase activity, rotational mechanism"/>
    <property type="evidence" value="ECO:0007669"/>
    <property type="project" value="UniProtKB-UniRule"/>
</dbReference>
<dbReference type="CDD" id="cd00310">
    <property type="entry name" value="ATP-synt_Fo_a_6"/>
    <property type="match status" value="1"/>
</dbReference>
<dbReference type="FunFam" id="1.20.120.220:FF:000001">
    <property type="entry name" value="ATP synthase subunit a, chloroplastic"/>
    <property type="match status" value="1"/>
</dbReference>
<dbReference type="Gene3D" id="1.20.120.220">
    <property type="entry name" value="ATP synthase, F0 complex, subunit A"/>
    <property type="match status" value="1"/>
</dbReference>
<dbReference type="HAMAP" id="MF_01393">
    <property type="entry name" value="ATP_synth_a_bact"/>
    <property type="match status" value="1"/>
</dbReference>
<dbReference type="InterPro" id="IPR045082">
    <property type="entry name" value="ATP_syn_F0_a_bact/chloroplast"/>
</dbReference>
<dbReference type="InterPro" id="IPR000568">
    <property type="entry name" value="ATP_synth_F0_asu"/>
</dbReference>
<dbReference type="InterPro" id="IPR023011">
    <property type="entry name" value="ATP_synth_F0_asu_AS"/>
</dbReference>
<dbReference type="InterPro" id="IPR035908">
    <property type="entry name" value="F0_ATP_A_sf"/>
</dbReference>
<dbReference type="NCBIfam" id="TIGR01131">
    <property type="entry name" value="ATP_synt_6_or_A"/>
    <property type="match status" value="1"/>
</dbReference>
<dbReference type="PANTHER" id="PTHR42823">
    <property type="entry name" value="ATP SYNTHASE SUBUNIT A, CHLOROPLASTIC"/>
    <property type="match status" value="1"/>
</dbReference>
<dbReference type="PANTHER" id="PTHR42823:SF3">
    <property type="entry name" value="ATP SYNTHASE SUBUNIT A, CHLOROPLASTIC"/>
    <property type="match status" value="1"/>
</dbReference>
<dbReference type="Pfam" id="PF00119">
    <property type="entry name" value="ATP-synt_A"/>
    <property type="match status" value="1"/>
</dbReference>
<dbReference type="PRINTS" id="PR00123">
    <property type="entry name" value="ATPASEA"/>
</dbReference>
<dbReference type="SUPFAM" id="SSF81336">
    <property type="entry name" value="F1F0 ATP synthase subunit A"/>
    <property type="match status" value="1"/>
</dbReference>
<dbReference type="PROSITE" id="PS00449">
    <property type="entry name" value="ATPASE_A"/>
    <property type="match status" value="1"/>
</dbReference>
<proteinExistence type="inferred from homology"/>
<accession>Q20EV6</accession>
<keyword id="KW-0066">ATP synthesis</keyword>
<keyword id="KW-0138">CF(0)</keyword>
<keyword id="KW-0150">Chloroplast</keyword>
<keyword id="KW-0375">Hydrogen ion transport</keyword>
<keyword id="KW-0406">Ion transport</keyword>
<keyword id="KW-0472">Membrane</keyword>
<keyword id="KW-0934">Plastid</keyword>
<keyword id="KW-0793">Thylakoid</keyword>
<keyword id="KW-0812">Transmembrane</keyword>
<keyword id="KW-1133">Transmembrane helix</keyword>
<keyword id="KW-0813">Transport</keyword>
<evidence type="ECO:0000255" key="1">
    <source>
        <dbReference type="HAMAP-Rule" id="MF_01393"/>
    </source>
</evidence>
<comment type="function">
    <text evidence="1">Key component of the proton channel; it plays a direct role in the translocation of protons across the membrane.</text>
</comment>
<comment type="subunit">
    <text evidence="1">F-type ATPases have 2 components, CF(1) - the catalytic core - and CF(0) - the membrane proton channel. CF(1) has five subunits: alpha(3), beta(3), gamma(1), delta(1), epsilon(1). CF(0) has four main subunits: a, b, b' and c.</text>
</comment>
<comment type="subcellular location">
    <subcellularLocation>
        <location evidence="1">Plastid</location>
        <location evidence="1">Chloroplast thylakoid membrane</location>
        <topology evidence="1">Multi-pass membrane protein</topology>
    </subcellularLocation>
</comment>
<comment type="similarity">
    <text evidence="1">Belongs to the ATPase A chain family.</text>
</comment>
<name>ATPI_OLTVI</name>
<organism>
    <name type="scientific">Oltmannsiellopsis viridis</name>
    <name type="common">Marine flagellate</name>
    <name type="synonym">Oltmannsiella viridis</name>
    <dbReference type="NCBI Taxonomy" id="51324"/>
    <lineage>
        <taxon>Eukaryota</taxon>
        <taxon>Viridiplantae</taxon>
        <taxon>Chlorophyta</taxon>
        <taxon>Ulvophyceae</taxon>
        <taxon>Oltmannsiellopsidales</taxon>
        <taxon>Oltmannsiellopsidaceae</taxon>
        <taxon>Oltmannsiellopsis</taxon>
    </lineage>
</organism>